<accession>A2RNM8</accession>
<organism>
    <name type="scientific">Lactococcus lactis subsp. cremoris (strain MG1363)</name>
    <dbReference type="NCBI Taxonomy" id="416870"/>
    <lineage>
        <taxon>Bacteria</taxon>
        <taxon>Bacillati</taxon>
        <taxon>Bacillota</taxon>
        <taxon>Bacilli</taxon>
        <taxon>Lactobacillales</taxon>
        <taxon>Streptococcaceae</taxon>
        <taxon>Lactococcus</taxon>
        <taxon>Lactococcus cremoris subsp. cremoris</taxon>
    </lineage>
</organism>
<keyword id="KW-0002">3D-structure</keyword>
<keyword id="KW-0687">Ribonucleoprotein</keyword>
<keyword id="KW-0689">Ribosomal protein</keyword>
<keyword id="KW-0694">RNA-binding</keyword>
<keyword id="KW-0699">rRNA-binding</keyword>
<proteinExistence type="evidence at protein level"/>
<gene>
    <name evidence="1" type="primary">rpsK</name>
    <name type="ordered locus">llmg_2355</name>
</gene>
<protein>
    <recommendedName>
        <fullName evidence="1">Small ribosomal subunit protein uS11</fullName>
    </recommendedName>
    <alternativeName>
        <fullName evidence="2">30S ribosomal protein S11</fullName>
    </alternativeName>
</protein>
<reference key="1">
    <citation type="journal article" date="2007" name="J. Bacteriol.">
        <title>The complete genome sequence of the lactic acid bacterial paradigm Lactococcus lactis subsp. cremoris MG1363.</title>
        <authorList>
            <person name="Wegmann U."/>
            <person name="O'Connell-Motherway M."/>
            <person name="Zomer A."/>
            <person name="Buist G."/>
            <person name="Shearman C."/>
            <person name="Canchaya C."/>
            <person name="Ventura M."/>
            <person name="Goesmann A."/>
            <person name="Gasson M.J."/>
            <person name="Kuipers O.P."/>
            <person name="van Sinderen D."/>
            <person name="Kok J."/>
        </authorList>
    </citation>
    <scope>NUCLEOTIDE SEQUENCE [LARGE SCALE GENOMIC DNA]</scope>
    <source>
        <strain>MG1363</strain>
    </source>
</reference>
<name>RS11_LACLM</name>
<evidence type="ECO:0000255" key="1">
    <source>
        <dbReference type="HAMAP-Rule" id="MF_01310"/>
    </source>
</evidence>
<evidence type="ECO:0000305" key="2"/>
<dbReference type="EMBL" id="AM406671">
    <property type="protein sequence ID" value="CAL98919.1"/>
    <property type="molecule type" value="Genomic_DNA"/>
</dbReference>
<dbReference type="RefSeq" id="WP_010906297.1">
    <property type="nucleotide sequence ID" value="NZ_WJVF01000005.1"/>
</dbReference>
<dbReference type="PDB" id="5MYJ">
    <property type="method" value="EM"/>
    <property type="resolution" value="5.60 A"/>
    <property type="chains" value="AK=1-127"/>
</dbReference>
<dbReference type="PDBsum" id="5MYJ"/>
<dbReference type="EMDB" id="EMD-3581"/>
<dbReference type="SMR" id="A2RNM8"/>
<dbReference type="STRING" id="416870.llmg_2355"/>
<dbReference type="GeneID" id="89634421"/>
<dbReference type="KEGG" id="llm:llmg_2355"/>
<dbReference type="eggNOG" id="COG0100">
    <property type="taxonomic scope" value="Bacteria"/>
</dbReference>
<dbReference type="HOGENOM" id="CLU_072439_5_0_9"/>
<dbReference type="OrthoDB" id="9806415at2"/>
<dbReference type="PhylomeDB" id="A2RNM8"/>
<dbReference type="Proteomes" id="UP000000364">
    <property type="component" value="Chromosome"/>
</dbReference>
<dbReference type="GO" id="GO:1990904">
    <property type="term" value="C:ribonucleoprotein complex"/>
    <property type="evidence" value="ECO:0007669"/>
    <property type="project" value="UniProtKB-KW"/>
</dbReference>
<dbReference type="GO" id="GO:0005840">
    <property type="term" value="C:ribosome"/>
    <property type="evidence" value="ECO:0007669"/>
    <property type="project" value="UniProtKB-KW"/>
</dbReference>
<dbReference type="GO" id="GO:0019843">
    <property type="term" value="F:rRNA binding"/>
    <property type="evidence" value="ECO:0007669"/>
    <property type="project" value="UniProtKB-UniRule"/>
</dbReference>
<dbReference type="GO" id="GO:0003735">
    <property type="term" value="F:structural constituent of ribosome"/>
    <property type="evidence" value="ECO:0007669"/>
    <property type="project" value="InterPro"/>
</dbReference>
<dbReference type="GO" id="GO:0006412">
    <property type="term" value="P:translation"/>
    <property type="evidence" value="ECO:0007669"/>
    <property type="project" value="UniProtKB-UniRule"/>
</dbReference>
<dbReference type="FunFam" id="3.30.420.80:FF:000001">
    <property type="entry name" value="30S ribosomal protein S11"/>
    <property type="match status" value="1"/>
</dbReference>
<dbReference type="Gene3D" id="3.30.420.80">
    <property type="entry name" value="Ribosomal protein S11"/>
    <property type="match status" value="1"/>
</dbReference>
<dbReference type="HAMAP" id="MF_01310">
    <property type="entry name" value="Ribosomal_uS11"/>
    <property type="match status" value="1"/>
</dbReference>
<dbReference type="InterPro" id="IPR001971">
    <property type="entry name" value="Ribosomal_uS11"/>
</dbReference>
<dbReference type="InterPro" id="IPR019981">
    <property type="entry name" value="Ribosomal_uS11_bac-type"/>
</dbReference>
<dbReference type="InterPro" id="IPR018102">
    <property type="entry name" value="Ribosomal_uS11_CS"/>
</dbReference>
<dbReference type="InterPro" id="IPR036967">
    <property type="entry name" value="Ribosomal_uS11_sf"/>
</dbReference>
<dbReference type="NCBIfam" id="NF003698">
    <property type="entry name" value="PRK05309.1"/>
    <property type="match status" value="1"/>
</dbReference>
<dbReference type="NCBIfam" id="TIGR03632">
    <property type="entry name" value="uS11_bact"/>
    <property type="match status" value="1"/>
</dbReference>
<dbReference type="PANTHER" id="PTHR11759">
    <property type="entry name" value="40S RIBOSOMAL PROTEIN S14/30S RIBOSOMAL PROTEIN S11"/>
    <property type="match status" value="1"/>
</dbReference>
<dbReference type="Pfam" id="PF00411">
    <property type="entry name" value="Ribosomal_S11"/>
    <property type="match status" value="1"/>
</dbReference>
<dbReference type="PIRSF" id="PIRSF002131">
    <property type="entry name" value="Ribosomal_S11"/>
    <property type="match status" value="1"/>
</dbReference>
<dbReference type="SUPFAM" id="SSF53137">
    <property type="entry name" value="Translational machinery components"/>
    <property type="match status" value="1"/>
</dbReference>
<dbReference type="PROSITE" id="PS00054">
    <property type="entry name" value="RIBOSOMAL_S11"/>
    <property type="match status" value="1"/>
</dbReference>
<comment type="function">
    <text evidence="1">Located on the platform of the 30S subunit, it bridges several disparate RNA helices of the 16S rRNA. Forms part of the Shine-Dalgarno cleft in the 70S ribosome.</text>
</comment>
<comment type="subunit">
    <text evidence="1">Part of the 30S ribosomal subunit. Interacts with proteins S7 and S18. Binds to IF-3.</text>
</comment>
<comment type="similarity">
    <text evidence="1">Belongs to the universal ribosomal protein uS11 family.</text>
</comment>
<feature type="chain" id="PRO_0000294779" description="Small ribosomal subunit protein uS11">
    <location>
        <begin position="1"/>
        <end position="127"/>
    </location>
</feature>
<sequence>MAKITRKRRVKKNIESGIVHIQSTFNNTIVMITDVHGNALAWSSAGALGFKGSKKSTPFAAQMASEAAAKAAQEQGLKTVSVTVKGPGSGRESAIRALAAAGLNVTSISDVTPVPHNGARPPKRRRV</sequence>